<evidence type="ECO:0000255" key="1">
    <source>
        <dbReference type="HAMAP-Rule" id="MF_01331"/>
    </source>
</evidence>
<evidence type="ECO:0000269" key="2">
    <source>
    </source>
</evidence>
<evidence type="ECO:0000305" key="3"/>
<evidence type="ECO:0007744" key="4">
    <source>
        <dbReference type="PDB" id="6HA1"/>
    </source>
</evidence>
<evidence type="ECO:0007744" key="5">
    <source>
        <dbReference type="PDB" id="6HA8"/>
    </source>
</evidence>
<evidence type="ECO:0007829" key="6">
    <source>
        <dbReference type="PDB" id="8S1P"/>
    </source>
</evidence>
<protein>
    <recommendedName>
        <fullName evidence="1">Large ribosomal subunit protein uL22</fullName>
    </recommendedName>
    <alternativeName>
        <fullName evidence="3">50S ribosomal protein L22</fullName>
    </alternativeName>
</protein>
<sequence>MQAKAVARTVRIAPRKARLVMDLIRGKQVGEAVSILNLTPRAASPIIEKVLKSAIANAEHNYEMDANNLVISQAFVDEGPTLKRFRPRAMGRASQINKRTSHITIVVSEKKEG</sequence>
<organism>
    <name type="scientific">Bacillus subtilis (strain 168)</name>
    <dbReference type="NCBI Taxonomy" id="224308"/>
    <lineage>
        <taxon>Bacteria</taxon>
        <taxon>Bacillati</taxon>
        <taxon>Bacillota</taxon>
        <taxon>Bacilli</taxon>
        <taxon>Bacillales</taxon>
        <taxon>Bacillaceae</taxon>
        <taxon>Bacillus</taxon>
    </lineage>
</organism>
<name>RL22_BACSU</name>
<accession>P42060</accession>
<dbReference type="EMBL" id="Z47978">
    <property type="protein sequence ID" value="CAA88014.1"/>
    <property type="molecule type" value="Genomic_DNA"/>
</dbReference>
<dbReference type="EMBL" id="U43929">
    <property type="protein sequence ID" value="AAC45961.1"/>
    <property type="molecule type" value="Genomic_DNA"/>
</dbReference>
<dbReference type="EMBL" id="D50303">
    <property type="status" value="NOT_ANNOTATED_CDS"/>
    <property type="molecule type" value="Genomic_DNA"/>
</dbReference>
<dbReference type="EMBL" id="D50302">
    <property type="protein sequence ID" value="BAA08836.1"/>
    <property type="molecule type" value="Genomic_DNA"/>
</dbReference>
<dbReference type="EMBL" id="AL009126">
    <property type="protein sequence ID" value="CAB11897.1"/>
    <property type="molecule type" value="Genomic_DNA"/>
</dbReference>
<dbReference type="PIR" id="H69696">
    <property type="entry name" value="H69696"/>
</dbReference>
<dbReference type="RefSeq" id="NP_388002.1">
    <property type="nucleotide sequence ID" value="NC_000964.3"/>
</dbReference>
<dbReference type="RefSeq" id="WP_003156475.1">
    <property type="nucleotide sequence ID" value="NZ_OZ025638.1"/>
</dbReference>
<dbReference type="PDB" id="3J3V">
    <property type="method" value="EM"/>
    <property type="resolution" value="13.30 A"/>
    <property type="chains" value="S=1-113"/>
</dbReference>
<dbReference type="PDB" id="3J3W">
    <property type="method" value="EM"/>
    <property type="resolution" value="10.70 A"/>
    <property type="chains" value="S=1-113"/>
</dbReference>
<dbReference type="PDB" id="3J9W">
    <property type="method" value="EM"/>
    <property type="resolution" value="3.90 A"/>
    <property type="chains" value="BV=1-113"/>
</dbReference>
<dbReference type="PDB" id="5NJT">
    <property type="method" value="EM"/>
    <property type="resolution" value="3.80 A"/>
    <property type="chains" value="l=2-110"/>
</dbReference>
<dbReference type="PDB" id="6HA1">
    <property type="method" value="EM"/>
    <property type="resolution" value="3.10 A"/>
    <property type="chains" value="S=1-113"/>
</dbReference>
<dbReference type="PDB" id="6HA8">
    <property type="method" value="EM"/>
    <property type="resolution" value="3.50 A"/>
    <property type="chains" value="S=1-113"/>
</dbReference>
<dbReference type="PDB" id="6HTQ">
    <property type="method" value="EM"/>
    <property type="resolution" value="4.50 A"/>
    <property type="chains" value="S=2-110"/>
</dbReference>
<dbReference type="PDB" id="6PPF">
    <property type="method" value="EM"/>
    <property type="resolution" value="3.40 A"/>
    <property type="chains" value="S=1-113"/>
</dbReference>
<dbReference type="PDB" id="6PPK">
    <property type="method" value="EM"/>
    <property type="resolution" value="4.40 A"/>
    <property type="chains" value="S=1-113"/>
</dbReference>
<dbReference type="PDB" id="6PVK">
    <property type="method" value="EM"/>
    <property type="resolution" value="3.40 A"/>
    <property type="chains" value="S=1-113"/>
</dbReference>
<dbReference type="PDB" id="6TNN">
    <property type="method" value="EM"/>
    <property type="resolution" value="3.07 A"/>
    <property type="chains" value="l=1-113"/>
</dbReference>
<dbReference type="PDB" id="6TPQ">
    <property type="method" value="EM"/>
    <property type="resolution" value="3.07 A"/>
    <property type="chains" value="l=1-113"/>
</dbReference>
<dbReference type="PDB" id="7AQC">
    <property type="method" value="EM"/>
    <property type="resolution" value="2.99 A"/>
    <property type="chains" value="S=1-113"/>
</dbReference>
<dbReference type="PDB" id="7AQD">
    <property type="method" value="EM"/>
    <property type="resolution" value="3.10 A"/>
    <property type="chains" value="S=1-113"/>
</dbReference>
<dbReference type="PDB" id="7AS8">
    <property type="method" value="EM"/>
    <property type="resolution" value="2.90 A"/>
    <property type="chains" value="W=1-113"/>
</dbReference>
<dbReference type="PDB" id="7AS9">
    <property type="method" value="EM"/>
    <property type="resolution" value="3.50 A"/>
    <property type="chains" value="W=1-113"/>
</dbReference>
<dbReference type="PDB" id="7O5B">
    <property type="method" value="EM"/>
    <property type="resolution" value="3.33 A"/>
    <property type="chains" value="r=1-113"/>
</dbReference>
<dbReference type="PDB" id="7OPE">
    <property type="method" value="EM"/>
    <property type="resolution" value="3.20 A"/>
    <property type="chains" value="W=1-113"/>
</dbReference>
<dbReference type="PDB" id="7QGU">
    <property type="method" value="EM"/>
    <property type="resolution" value="4.75 A"/>
    <property type="chains" value="S=1-113"/>
</dbReference>
<dbReference type="PDB" id="7QH4">
    <property type="method" value="EM"/>
    <property type="resolution" value="5.45 A"/>
    <property type="chains" value="S=1-113"/>
</dbReference>
<dbReference type="PDB" id="7QV1">
    <property type="method" value="EM"/>
    <property type="resolution" value="3.50 A"/>
    <property type="chains" value="S=1-113"/>
</dbReference>
<dbReference type="PDB" id="7QV2">
    <property type="method" value="EM"/>
    <property type="resolution" value="3.50 A"/>
    <property type="chains" value="S=1-113"/>
</dbReference>
<dbReference type="PDB" id="7QV3">
    <property type="method" value="EM"/>
    <property type="resolution" value="5.14 A"/>
    <property type="chains" value="S=1-113"/>
</dbReference>
<dbReference type="PDB" id="7S9U">
    <property type="method" value="EM"/>
    <property type="resolution" value="3.20 A"/>
    <property type="chains" value="S=1-113"/>
</dbReference>
<dbReference type="PDB" id="7SAE">
    <property type="method" value="EM"/>
    <property type="resolution" value="3.00 A"/>
    <property type="chains" value="S=1-113"/>
</dbReference>
<dbReference type="PDB" id="8BUU">
    <property type="method" value="EM"/>
    <property type="resolution" value="2.90 A"/>
    <property type="chains" value="S=1-113"/>
</dbReference>
<dbReference type="PDB" id="8QCQ">
    <property type="method" value="EM"/>
    <property type="resolution" value="2.30 A"/>
    <property type="chains" value="S=1-113"/>
</dbReference>
<dbReference type="PDB" id="8QPP">
    <property type="method" value="EM"/>
    <property type="resolution" value="3.40 A"/>
    <property type="chains" value="r=2-110"/>
</dbReference>
<dbReference type="PDB" id="8R55">
    <property type="method" value="EM"/>
    <property type="resolution" value="3.57 A"/>
    <property type="chains" value="r=2-110"/>
</dbReference>
<dbReference type="PDB" id="8S1P">
    <property type="method" value="EM"/>
    <property type="resolution" value="1.96 A"/>
    <property type="chains" value="S=1-113"/>
</dbReference>
<dbReference type="PDB" id="8S1U">
    <property type="method" value="EM"/>
    <property type="resolution" value="3.40 A"/>
    <property type="chains" value="S=1-113"/>
</dbReference>
<dbReference type="PDB" id="9BS0">
    <property type="method" value="EM"/>
    <property type="resolution" value="3.30 A"/>
    <property type="chains" value="N=1-113"/>
</dbReference>
<dbReference type="PDB" id="9BSL">
    <property type="method" value="EM"/>
    <property type="resolution" value="3.10 A"/>
    <property type="chains" value="N=1-113"/>
</dbReference>
<dbReference type="PDB" id="9BSS">
    <property type="method" value="EM"/>
    <property type="resolution" value="3.10 A"/>
    <property type="chains" value="N=1-113"/>
</dbReference>
<dbReference type="PDBsum" id="3J3V"/>
<dbReference type="PDBsum" id="3J3W"/>
<dbReference type="PDBsum" id="3J9W"/>
<dbReference type="PDBsum" id="5NJT"/>
<dbReference type="PDBsum" id="6HA1"/>
<dbReference type="PDBsum" id="6HA8"/>
<dbReference type="PDBsum" id="6HTQ"/>
<dbReference type="PDBsum" id="6PPF"/>
<dbReference type="PDBsum" id="6PPK"/>
<dbReference type="PDBsum" id="6PVK"/>
<dbReference type="PDBsum" id="6TNN"/>
<dbReference type="PDBsum" id="6TPQ"/>
<dbReference type="PDBsum" id="7AQC"/>
<dbReference type="PDBsum" id="7AQD"/>
<dbReference type="PDBsum" id="7AS8"/>
<dbReference type="PDBsum" id="7AS9"/>
<dbReference type="PDBsum" id="7O5B"/>
<dbReference type="PDBsum" id="7OPE"/>
<dbReference type="PDBsum" id="7QGU"/>
<dbReference type="PDBsum" id="7QH4"/>
<dbReference type="PDBsum" id="7QV1"/>
<dbReference type="PDBsum" id="7QV2"/>
<dbReference type="PDBsum" id="7QV3"/>
<dbReference type="PDBsum" id="7S9U"/>
<dbReference type="PDBsum" id="7SAE"/>
<dbReference type="PDBsum" id="8BUU"/>
<dbReference type="PDBsum" id="8QCQ"/>
<dbReference type="PDBsum" id="8QPP"/>
<dbReference type="PDBsum" id="8R55"/>
<dbReference type="PDBsum" id="8S1P"/>
<dbReference type="PDBsum" id="8S1U"/>
<dbReference type="PDBsum" id="9BS0"/>
<dbReference type="PDBsum" id="9BSL"/>
<dbReference type="PDBsum" id="9BSS"/>
<dbReference type="EMDB" id="EMD-0176"/>
<dbReference type="EMDB" id="EMD-0177"/>
<dbReference type="EMDB" id="EMD-0270"/>
<dbReference type="EMDB" id="EMD-10535"/>
<dbReference type="EMDB" id="EMD-10543"/>
<dbReference type="EMDB" id="EMD-11862"/>
<dbReference type="EMDB" id="EMD-11864"/>
<dbReference type="EMDB" id="EMD-11889"/>
<dbReference type="EMDB" id="EMD-11890"/>
<dbReference type="EMDB" id="EMD-12734"/>
<dbReference type="EMDB" id="EMD-13017"/>
<dbReference type="EMDB" id="EMD-14157"/>
<dbReference type="EMDB" id="EMD-14158"/>
<dbReference type="EMDB" id="EMD-14159"/>
<dbReference type="EMDB" id="EMD-16246"/>
<dbReference type="EMDB" id="EMD-18332"/>
<dbReference type="EMDB" id="EMD-19638"/>
<dbReference type="EMDB" id="EMD-19641"/>
<dbReference type="EMDB" id="EMD-3656"/>
<dbReference type="EMDB" id="EMD-44849"/>
<dbReference type="EMDB" id="EMD-44869"/>
<dbReference type="EMDB" id="EMD-44871"/>
<dbReference type="SMR" id="P42060"/>
<dbReference type="FunCoup" id="P42060">
    <property type="interactions" value="598"/>
</dbReference>
<dbReference type="IntAct" id="P42060">
    <property type="interactions" value="1"/>
</dbReference>
<dbReference type="STRING" id="224308.BSU01210"/>
<dbReference type="jPOST" id="P42060"/>
<dbReference type="PaxDb" id="224308-BSU01210"/>
<dbReference type="EnsemblBacteria" id="CAB11897">
    <property type="protein sequence ID" value="CAB11897"/>
    <property type="gene ID" value="BSU_01210"/>
</dbReference>
<dbReference type="GeneID" id="93079285"/>
<dbReference type="GeneID" id="938123"/>
<dbReference type="KEGG" id="bsu:BSU01210"/>
<dbReference type="PATRIC" id="fig|224308.179.peg.124"/>
<dbReference type="eggNOG" id="COG0091">
    <property type="taxonomic scope" value="Bacteria"/>
</dbReference>
<dbReference type="InParanoid" id="P42060"/>
<dbReference type="OrthoDB" id="9805969at2"/>
<dbReference type="PhylomeDB" id="P42060"/>
<dbReference type="BioCyc" id="BSUB:BSU01210-MONOMER"/>
<dbReference type="EvolutionaryTrace" id="P42060"/>
<dbReference type="PRO" id="PR:P42060"/>
<dbReference type="Proteomes" id="UP000001570">
    <property type="component" value="Chromosome"/>
</dbReference>
<dbReference type="GO" id="GO:0022625">
    <property type="term" value="C:cytosolic large ribosomal subunit"/>
    <property type="evidence" value="ECO:0000318"/>
    <property type="project" value="GO_Central"/>
</dbReference>
<dbReference type="GO" id="GO:0019843">
    <property type="term" value="F:rRNA binding"/>
    <property type="evidence" value="ECO:0007669"/>
    <property type="project" value="UniProtKB-UniRule"/>
</dbReference>
<dbReference type="GO" id="GO:0003735">
    <property type="term" value="F:structural constituent of ribosome"/>
    <property type="evidence" value="ECO:0000318"/>
    <property type="project" value="GO_Central"/>
</dbReference>
<dbReference type="GO" id="GO:0006412">
    <property type="term" value="P:translation"/>
    <property type="evidence" value="ECO:0000318"/>
    <property type="project" value="GO_Central"/>
</dbReference>
<dbReference type="CDD" id="cd00336">
    <property type="entry name" value="Ribosomal_L22"/>
    <property type="match status" value="1"/>
</dbReference>
<dbReference type="FunFam" id="3.90.470.10:FF:000001">
    <property type="entry name" value="50S ribosomal protein L22"/>
    <property type="match status" value="1"/>
</dbReference>
<dbReference type="Gene3D" id="3.90.470.10">
    <property type="entry name" value="Ribosomal protein L22/L17"/>
    <property type="match status" value="1"/>
</dbReference>
<dbReference type="HAMAP" id="MF_01331_B">
    <property type="entry name" value="Ribosomal_uL22_B"/>
    <property type="match status" value="1"/>
</dbReference>
<dbReference type="InterPro" id="IPR001063">
    <property type="entry name" value="Ribosomal_uL22"/>
</dbReference>
<dbReference type="InterPro" id="IPR005727">
    <property type="entry name" value="Ribosomal_uL22_bac/chlpt-type"/>
</dbReference>
<dbReference type="InterPro" id="IPR047867">
    <property type="entry name" value="Ribosomal_uL22_bac/org-type"/>
</dbReference>
<dbReference type="InterPro" id="IPR018260">
    <property type="entry name" value="Ribosomal_uL22_CS"/>
</dbReference>
<dbReference type="InterPro" id="IPR036394">
    <property type="entry name" value="Ribosomal_uL22_sf"/>
</dbReference>
<dbReference type="NCBIfam" id="TIGR01044">
    <property type="entry name" value="rplV_bact"/>
    <property type="match status" value="1"/>
</dbReference>
<dbReference type="PANTHER" id="PTHR13501">
    <property type="entry name" value="CHLOROPLAST 50S RIBOSOMAL PROTEIN L22-RELATED"/>
    <property type="match status" value="1"/>
</dbReference>
<dbReference type="PANTHER" id="PTHR13501:SF8">
    <property type="entry name" value="LARGE RIBOSOMAL SUBUNIT PROTEIN UL22M"/>
    <property type="match status" value="1"/>
</dbReference>
<dbReference type="Pfam" id="PF00237">
    <property type="entry name" value="Ribosomal_L22"/>
    <property type="match status" value="1"/>
</dbReference>
<dbReference type="SUPFAM" id="SSF54843">
    <property type="entry name" value="Ribosomal protein L22"/>
    <property type="match status" value="1"/>
</dbReference>
<dbReference type="PROSITE" id="PS00464">
    <property type="entry name" value="RIBOSOMAL_L22"/>
    <property type="match status" value="1"/>
</dbReference>
<proteinExistence type="evidence at protein level"/>
<feature type="chain" id="PRO_0000125119" description="Large ribosomal subunit protein uL22">
    <location>
        <begin position="1"/>
        <end position="113"/>
    </location>
</feature>
<feature type="sequence conflict" description="In Ref. 1; CAA88014." evidence="3" ref="1">
    <original>I</original>
    <variation>N</variation>
    <location>
        <position position="35"/>
    </location>
</feature>
<feature type="sequence conflict" description="In Ref. 1; CAA88014." evidence="3" ref="1">
    <original>RA</original>
    <variation>IS</variation>
    <location>
        <begin position="41"/>
        <end position="42"/>
    </location>
</feature>
<feature type="sequence conflict" description="In Ref. 1; CAA88014." evidence="3" ref="1">
    <original>F</original>
    <variation>L</variation>
    <location>
        <position position="85"/>
    </location>
</feature>
<feature type="sequence conflict" description="In Ref. 1; CAA88014." evidence="3" ref="1">
    <original>I</original>
    <variation>V</variation>
    <location>
        <position position="105"/>
    </location>
</feature>
<feature type="strand" evidence="6">
    <location>
        <begin position="2"/>
        <end position="12"/>
    </location>
</feature>
<feature type="helix" evidence="6">
    <location>
        <begin position="14"/>
        <end position="24"/>
    </location>
</feature>
<feature type="helix" evidence="6">
    <location>
        <begin position="29"/>
        <end position="38"/>
    </location>
</feature>
<feature type="helix" evidence="6">
    <location>
        <begin position="43"/>
        <end position="60"/>
    </location>
</feature>
<feature type="helix" evidence="6">
    <location>
        <begin position="66"/>
        <end position="68"/>
    </location>
</feature>
<feature type="strand" evidence="6">
    <location>
        <begin position="69"/>
        <end position="78"/>
    </location>
</feature>
<feature type="strand" evidence="6">
    <location>
        <begin position="82"/>
        <end position="87"/>
    </location>
</feature>
<feature type="helix" evidence="6">
    <location>
        <begin position="89"/>
        <end position="91"/>
    </location>
</feature>
<feature type="strand" evidence="6">
    <location>
        <begin position="93"/>
        <end position="98"/>
    </location>
</feature>
<feature type="strand" evidence="6">
    <location>
        <begin position="101"/>
        <end position="109"/>
    </location>
</feature>
<reference key="1">
    <citation type="submission" date="1995-01" db="EMBL/GenBank/DDBJ databases">
        <authorList>
            <person name="Bischof O."/>
            <person name="Wittmann-Liebold B."/>
            <person name="Kruft V."/>
        </authorList>
    </citation>
    <scope>NUCLEOTIDE SEQUENCE [GENOMIC DNA]</scope>
    <source>
        <strain>168</strain>
    </source>
</reference>
<reference key="2">
    <citation type="journal article" date="1997" name="J. Bacteriol.">
        <title>Analysis of the Bacillus subtilis S10 ribosomal protein gene cluster identifies two promoters that may be responsible for transcription of the entire 15-kilobase S10-spc-alpha cluster.</title>
        <authorList>
            <person name="Li X."/>
            <person name="Lindahl L."/>
            <person name="Sha Y."/>
            <person name="Zengel J.M."/>
        </authorList>
    </citation>
    <scope>NUCLEOTIDE SEQUENCE [GENOMIC DNA]</scope>
    <source>
        <strain>SG38</strain>
    </source>
</reference>
<reference key="3">
    <citation type="journal article" date="1996" name="Microbiology">
        <title>Sequence analysis of a 50 kb region between spo0H and rrnH on the Bacillus subtilis chromosome.</title>
        <authorList>
            <person name="Yasumoto K."/>
            <person name="Liu H."/>
            <person name="Jeong S.M."/>
            <person name="Ohashi Y."/>
            <person name="Kakinuma S."/>
            <person name="Tanaka K."/>
            <person name="Kawamura F."/>
            <person name="Yoshikawa H."/>
            <person name="Takahashi H."/>
        </authorList>
    </citation>
    <scope>NUCLEOTIDE SEQUENCE [GENOMIC DNA]</scope>
    <source>
        <strain>168</strain>
    </source>
</reference>
<reference key="4">
    <citation type="journal article" date="1997" name="Nature">
        <title>The complete genome sequence of the Gram-positive bacterium Bacillus subtilis.</title>
        <authorList>
            <person name="Kunst F."/>
            <person name="Ogasawara N."/>
            <person name="Moszer I."/>
            <person name="Albertini A.M."/>
            <person name="Alloni G."/>
            <person name="Azevedo V."/>
            <person name="Bertero M.G."/>
            <person name="Bessieres P."/>
            <person name="Bolotin A."/>
            <person name="Borchert S."/>
            <person name="Borriss R."/>
            <person name="Boursier L."/>
            <person name="Brans A."/>
            <person name="Braun M."/>
            <person name="Brignell S.C."/>
            <person name="Bron S."/>
            <person name="Brouillet S."/>
            <person name="Bruschi C.V."/>
            <person name="Caldwell B."/>
            <person name="Capuano V."/>
            <person name="Carter N.M."/>
            <person name="Choi S.-K."/>
            <person name="Codani J.-J."/>
            <person name="Connerton I.F."/>
            <person name="Cummings N.J."/>
            <person name="Daniel R.A."/>
            <person name="Denizot F."/>
            <person name="Devine K.M."/>
            <person name="Duesterhoeft A."/>
            <person name="Ehrlich S.D."/>
            <person name="Emmerson P.T."/>
            <person name="Entian K.-D."/>
            <person name="Errington J."/>
            <person name="Fabret C."/>
            <person name="Ferrari E."/>
            <person name="Foulger D."/>
            <person name="Fritz C."/>
            <person name="Fujita M."/>
            <person name="Fujita Y."/>
            <person name="Fuma S."/>
            <person name="Galizzi A."/>
            <person name="Galleron N."/>
            <person name="Ghim S.-Y."/>
            <person name="Glaser P."/>
            <person name="Goffeau A."/>
            <person name="Golightly E.J."/>
            <person name="Grandi G."/>
            <person name="Guiseppi G."/>
            <person name="Guy B.J."/>
            <person name="Haga K."/>
            <person name="Haiech J."/>
            <person name="Harwood C.R."/>
            <person name="Henaut A."/>
            <person name="Hilbert H."/>
            <person name="Holsappel S."/>
            <person name="Hosono S."/>
            <person name="Hullo M.-F."/>
            <person name="Itaya M."/>
            <person name="Jones L.-M."/>
            <person name="Joris B."/>
            <person name="Karamata D."/>
            <person name="Kasahara Y."/>
            <person name="Klaerr-Blanchard M."/>
            <person name="Klein C."/>
            <person name="Kobayashi Y."/>
            <person name="Koetter P."/>
            <person name="Koningstein G."/>
            <person name="Krogh S."/>
            <person name="Kumano M."/>
            <person name="Kurita K."/>
            <person name="Lapidus A."/>
            <person name="Lardinois S."/>
            <person name="Lauber J."/>
            <person name="Lazarevic V."/>
            <person name="Lee S.-M."/>
            <person name="Levine A."/>
            <person name="Liu H."/>
            <person name="Masuda S."/>
            <person name="Mauel C."/>
            <person name="Medigue C."/>
            <person name="Medina N."/>
            <person name="Mellado R.P."/>
            <person name="Mizuno M."/>
            <person name="Moestl D."/>
            <person name="Nakai S."/>
            <person name="Noback M."/>
            <person name="Noone D."/>
            <person name="O'Reilly M."/>
            <person name="Ogawa K."/>
            <person name="Ogiwara A."/>
            <person name="Oudega B."/>
            <person name="Park S.-H."/>
            <person name="Parro V."/>
            <person name="Pohl T.M."/>
            <person name="Portetelle D."/>
            <person name="Porwollik S."/>
            <person name="Prescott A.M."/>
            <person name="Presecan E."/>
            <person name="Pujic P."/>
            <person name="Purnelle B."/>
            <person name="Rapoport G."/>
            <person name="Rey M."/>
            <person name="Reynolds S."/>
            <person name="Rieger M."/>
            <person name="Rivolta C."/>
            <person name="Rocha E."/>
            <person name="Roche B."/>
            <person name="Rose M."/>
            <person name="Sadaie Y."/>
            <person name="Sato T."/>
            <person name="Scanlan E."/>
            <person name="Schleich S."/>
            <person name="Schroeter R."/>
            <person name="Scoffone F."/>
            <person name="Sekiguchi J."/>
            <person name="Sekowska A."/>
            <person name="Seror S.J."/>
            <person name="Serror P."/>
            <person name="Shin B.-S."/>
            <person name="Soldo B."/>
            <person name="Sorokin A."/>
            <person name="Tacconi E."/>
            <person name="Takagi T."/>
            <person name="Takahashi H."/>
            <person name="Takemaru K."/>
            <person name="Takeuchi M."/>
            <person name="Tamakoshi A."/>
            <person name="Tanaka T."/>
            <person name="Terpstra P."/>
            <person name="Tognoni A."/>
            <person name="Tosato V."/>
            <person name="Uchiyama S."/>
            <person name="Vandenbol M."/>
            <person name="Vannier F."/>
            <person name="Vassarotti A."/>
            <person name="Viari A."/>
            <person name="Wambutt R."/>
            <person name="Wedler E."/>
            <person name="Wedler H."/>
            <person name="Weitzenegger T."/>
            <person name="Winters P."/>
            <person name="Wipat A."/>
            <person name="Yamamoto H."/>
            <person name="Yamane K."/>
            <person name="Yasumoto K."/>
            <person name="Yata K."/>
            <person name="Yoshida K."/>
            <person name="Yoshikawa H.-F."/>
            <person name="Zumstein E."/>
            <person name="Yoshikawa H."/>
            <person name="Danchin A."/>
        </authorList>
    </citation>
    <scope>NUCLEOTIDE SEQUENCE [LARGE SCALE GENOMIC DNA]</scope>
    <source>
        <strain>168</strain>
    </source>
</reference>
<reference evidence="4 5" key="5">
    <citation type="journal article" date="2018" name="Proc. Natl. Acad. Sci. U.S.A.">
        <title>Structural basis for antibiotic resistance mediated by the Bacillus subtilis ABCF ATPase VmlR.</title>
        <authorList>
            <person name="Crowe-McAuliffe C."/>
            <person name="Graf M."/>
            <person name="Huter P."/>
            <person name="Takada H."/>
            <person name="Abdelshahid M."/>
            <person name="Novacek J."/>
            <person name="Murina V."/>
            <person name="Atkinson G.C."/>
            <person name="Hauryliuk V."/>
            <person name="Wilson D.N."/>
        </authorList>
    </citation>
    <scope>STRUCTURE BY ELECTRON MICROSCOPY (3.10 ANGSTROMS) OF 1-113 WITH AND WITHOUT VIRGINIAMYCIN M</scope>
    <scope>SUBUNIT</scope>
</reference>
<keyword id="KW-0002">3D-structure</keyword>
<keyword id="KW-1185">Reference proteome</keyword>
<keyword id="KW-0687">Ribonucleoprotein</keyword>
<keyword id="KW-0689">Ribosomal protein</keyword>
<keyword id="KW-0694">RNA-binding</keyword>
<keyword id="KW-0699">rRNA-binding</keyword>
<gene>
    <name evidence="1" type="primary">rplV</name>
    <name type="ordered locus">BSU01210</name>
</gene>
<comment type="function">
    <text evidence="1">This protein binds specifically to 23S rRNA; its binding is stimulated by other ribosomal proteins, e.g. L4, L17, and L20. It is important during the early stages of 50S assembly. It makes multiple contacts with different domains of the 23S rRNA in the assembled 50S subunit and ribosome (By similarity).</text>
</comment>
<comment type="function">
    <text evidence="1">The globular domain of the protein is located near the polypeptide exit tunnel on the outside of the subunit, while an extended beta-hairpin is found that lines the wall of the exit tunnel in the center of the 70S ribosome.</text>
</comment>
<comment type="subunit">
    <text evidence="2">Part of the 50S ribosomal subunit.</text>
</comment>
<comment type="similarity">
    <text evidence="1">Belongs to the universal ribosomal protein uL22 family.</text>
</comment>